<accession>Q9PDT5</accession>
<proteinExistence type="inferred from homology"/>
<evidence type="ECO:0000255" key="1">
    <source>
        <dbReference type="HAMAP-Rule" id="MF_00107"/>
    </source>
</evidence>
<comment type="function">
    <text evidence="1">Involved in the biosynthesis of isopentenyl diphosphate (IPP) and dimethylallyl diphosphate (DMAPP), two major building blocks of isoprenoid compounds. Catalyzes the conversion of 4-diphosphocytidyl-2-C-methyl-D-erythritol 2-phosphate (CDP-ME2P) to 2-C-methyl-D-erythritol 2,4-cyclodiphosphate (ME-CPP) with a corresponding release of cytidine 5-monophosphate (CMP).</text>
</comment>
<comment type="catalytic activity">
    <reaction evidence="1">
        <text>4-CDP-2-C-methyl-D-erythritol 2-phosphate = 2-C-methyl-D-erythritol 2,4-cyclic diphosphate + CMP</text>
        <dbReference type="Rhea" id="RHEA:23864"/>
        <dbReference type="ChEBI" id="CHEBI:57919"/>
        <dbReference type="ChEBI" id="CHEBI:58483"/>
        <dbReference type="ChEBI" id="CHEBI:60377"/>
        <dbReference type="EC" id="4.6.1.12"/>
    </reaction>
</comment>
<comment type="cofactor">
    <cofactor evidence="1">
        <name>a divalent metal cation</name>
        <dbReference type="ChEBI" id="CHEBI:60240"/>
    </cofactor>
    <text evidence="1">Binds 1 divalent metal cation per subunit.</text>
</comment>
<comment type="pathway">
    <text evidence="1">Isoprenoid biosynthesis; isopentenyl diphosphate biosynthesis via DXP pathway; isopentenyl diphosphate from 1-deoxy-D-xylulose 5-phosphate: step 4/6.</text>
</comment>
<comment type="subunit">
    <text evidence="1">Homotrimer.</text>
</comment>
<comment type="similarity">
    <text evidence="1">Belongs to the IspF family.</text>
</comment>
<keyword id="KW-0414">Isoprene biosynthesis</keyword>
<keyword id="KW-0456">Lyase</keyword>
<keyword id="KW-0479">Metal-binding</keyword>
<sequence>MSGLFRGRVMTGLNVRIGQGYDVHAFGPGDHVMLGGVRVPHRCGVLAHSDGDVILHALCDAMLGALGLGDIGQHFPPSDVRWKGADSGVFVRHCHLLLRERDWCVGNVDATAICESPKIAPYVNAMREGIARLLEVQPECVSVKATTSEGLGFIGRGEGLAAQVVVLLYRLNGVVV</sequence>
<gene>
    <name evidence="1" type="primary">ispF</name>
    <name type="ordered locus">XF_1294</name>
</gene>
<protein>
    <recommendedName>
        <fullName evidence="1">2-C-methyl-D-erythritol 2,4-cyclodiphosphate synthase</fullName>
        <shortName evidence="1">MECDP-synthase</shortName>
        <shortName evidence="1">MECPP-synthase</shortName>
        <shortName evidence="1">MECPS</shortName>
        <ecNumber evidence="1">4.6.1.12</ecNumber>
    </recommendedName>
</protein>
<name>ISPF_XYLFA</name>
<feature type="chain" id="PRO_0000189521" description="2-C-methyl-D-erythritol 2,4-cyclodiphosphate synthase">
    <location>
        <begin position="1"/>
        <end position="176"/>
    </location>
</feature>
<feature type="binding site" evidence="1">
    <location>
        <begin position="22"/>
        <end position="24"/>
    </location>
    <ligand>
        <name>4-CDP-2-C-methyl-D-erythritol 2-phosphate</name>
        <dbReference type="ChEBI" id="CHEBI:57919"/>
    </ligand>
</feature>
<feature type="binding site" evidence="1">
    <location>
        <position position="22"/>
    </location>
    <ligand>
        <name>a divalent metal cation</name>
        <dbReference type="ChEBI" id="CHEBI:60240"/>
    </ligand>
</feature>
<feature type="binding site" evidence="1">
    <location>
        <position position="24"/>
    </location>
    <ligand>
        <name>a divalent metal cation</name>
        <dbReference type="ChEBI" id="CHEBI:60240"/>
    </ligand>
</feature>
<feature type="binding site" evidence="1">
    <location>
        <begin position="48"/>
        <end position="49"/>
    </location>
    <ligand>
        <name>4-CDP-2-C-methyl-D-erythritol 2-phosphate</name>
        <dbReference type="ChEBI" id="CHEBI:57919"/>
    </ligand>
</feature>
<feature type="binding site" evidence="1">
    <location>
        <position position="56"/>
    </location>
    <ligand>
        <name>a divalent metal cation</name>
        <dbReference type="ChEBI" id="CHEBI:60240"/>
    </ligand>
</feature>
<feature type="binding site" evidence="1">
    <location>
        <begin position="70"/>
        <end position="72"/>
    </location>
    <ligand>
        <name>4-CDP-2-C-methyl-D-erythritol 2-phosphate</name>
        <dbReference type="ChEBI" id="CHEBI:57919"/>
    </ligand>
</feature>
<feature type="binding site" evidence="1">
    <location>
        <begin position="146"/>
        <end position="149"/>
    </location>
    <ligand>
        <name>4-CDP-2-C-methyl-D-erythritol 2-phosphate</name>
        <dbReference type="ChEBI" id="CHEBI:57919"/>
    </ligand>
</feature>
<feature type="binding site" evidence="1">
    <location>
        <position position="153"/>
    </location>
    <ligand>
        <name>4-CDP-2-C-methyl-D-erythritol 2-phosphate</name>
        <dbReference type="ChEBI" id="CHEBI:57919"/>
    </ligand>
</feature>
<feature type="binding site" evidence="1">
    <location>
        <position position="156"/>
    </location>
    <ligand>
        <name>4-CDP-2-C-methyl-D-erythritol 2-phosphate</name>
        <dbReference type="ChEBI" id="CHEBI:57919"/>
    </ligand>
</feature>
<feature type="site" description="Transition state stabilizer" evidence="1">
    <location>
        <position position="48"/>
    </location>
</feature>
<feature type="site" description="Transition state stabilizer" evidence="1">
    <location>
        <position position="147"/>
    </location>
</feature>
<reference key="1">
    <citation type="journal article" date="2000" name="Nature">
        <title>The genome sequence of the plant pathogen Xylella fastidiosa.</title>
        <authorList>
            <person name="Simpson A.J.G."/>
            <person name="Reinach F.C."/>
            <person name="Arruda P."/>
            <person name="Abreu F.A."/>
            <person name="Acencio M."/>
            <person name="Alvarenga R."/>
            <person name="Alves L.M.C."/>
            <person name="Araya J.E."/>
            <person name="Baia G.S."/>
            <person name="Baptista C.S."/>
            <person name="Barros M.H."/>
            <person name="Bonaccorsi E.D."/>
            <person name="Bordin S."/>
            <person name="Bove J.M."/>
            <person name="Briones M.R.S."/>
            <person name="Bueno M.R.P."/>
            <person name="Camargo A.A."/>
            <person name="Camargo L.E.A."/>
            <person name="Carraro D.M."/>
            <person name="Carrer H."/>
            <person name="Colauto N.B."/>
            <person name="Colombo C."/>
            <person name="Costa F.F."/>
            <person name="Costa M.C.R."/>
            <person name="Costa-Neto C.M."/>
            <person name="Coutinho L.L."/>
            <person name="Cristofani M."/>
            <person name="Dias-Neto E."/>
            <person name="Docena C."/>
            <person name="El-Dorry H."/>
            <person name="Facincani A.P."/>
            <person name="Ferreira A.J.S."/>
            <person name="Ferreira V.C.A."/>
            <person name="Ferro J.A."/>
            <person name="Fraga J.S."/>
            <person name="Franca S.C."/>
            <person name="Franco M.C."/>
            <person name="Frohme M."/>
            <person name="Furlan L.R."/>
            <person name="Garnier M."/>
            <person name="Goldman G.H."/>
            <person name="Goldman M.H.S."/>
            <person name="Gomes S.L."/>
            <person name="Gruber A."/>
            <person name="Ho P.L."/>
            <person name="Hoheisel J.D."/>
            <person name="Junqueira M.L."/>
            <person name="Kemper E.L."/>
            <person name="Kitajima J.P."/>
            <person name="Krieger J.E."/>
            <person name="Kuramae E.E."/>
            <person name="Laigret F."/>
            <person name="Lambais M.R."/>
            <person name="Leite L.C.C."/>
            <person name="Lemos E.G.M."/>
            <person name="Lemos M.V.F."/>
            <person name="Lopes S.A."/>
            <person name="Lopes C.R."/>
            <person name="Machado J.A."/>
            <person name="Machado M.A."/>
            <person name="Madeira A.M.B.N."/>
            <person name="Madeira H.M.F."/>
            <person name="Marino C.L."/>
            <person name="Marques M.V."/>
            <person name="Martins E.A.L."/>
            <person name="Martins E.M.F."/>
            <person name="Matsukuma A.Y."/>
            <person name="Menck C.F.M."/>
            <person name="Miracca E.C."/>
            <person name="Miyaki C.Y."/>
            <person name="Monteiro-Vitorello C.B."/>
            <person name="Moon D.H."/>
            <person name="Nagai M.A."/>
            <person name="Nascimento A.L.T.O."/>
            <person name="Netto L.E.S."/>
            <person name="Nhani A. Jr."/>
            <person name="Nobrega F.G."/>
            <person name="Nunes L.R."/>
            <person name="Oliveira M.A."/>
            <person name="de Oliveira M.C."/>
            <person name="de Oliveira R.C."/>
            <person name="Palmieri D.A."/>
            <person name="Paris A."/>
            <person name="Peixoto B.R."/>
            <person name="Pereira G.A.G."/>
            <person name="Pereira H.A. Jr."/>
            <person name="Pesquero J.B."/>
            <person name="Quaggio R.B."/>
            <person name="Roberto P.G."/>
            <person name="Rodrigues V."/>
            <person name="de Rosa A.J.M."/>
            <person name="de Rosa V.E. Jr."/>
            <person name="de Sa R.G."/>
            <person name="Santelli R.V."/>
            <person name="Sawasaki H.E."/>
            <person name="da Silva A.C.R."/>
            <person name="da Silva A.M."/>
            <person name="da Silva F.R."/>
            <person name="Silva W.A. Jr."/>
            <person name="da Silveira J.F."/>
            <person name="Silvestri M.L.Z."/>
            <person name="Siqueira W.J."/>
            <person name="de Souza A.A."/>
            <person name="de Souza A.P."/>
            <person name="Terenzi M.F."/>
            <person name="Truffi D."/>
            <person name="Tsai S.M."/>
            <person name="Tsuhako M.H."/>
            <person name="Vallada H."/>
            <person name="Van Sluys M.A."/>
            <person name="Verjovski-Almeida S."/>
            <person name="Vettore A.L."/>
            <person name="Zago M.A."/>
            <person name="Zatz M."/>
            <person name="Meidanis J."/>
            <person name="Setubal J.C."/>
        </authorList>
    </citation>
    <scope>NUCLEOTIDE SEQUENCE [LARGE SCALE GENOMIC DNA]</scope>
    <source>
        <strain>9a5c</strain>
    </source>
</reference>
<dbReference type="EC" id="4.6.1.12" evidence="1"/>
<dbReference type="EMBL" id="AE003849">
    <property type="protein sequence ID" value="AAF84103.1"/>
    <property type="molecule type" value="Genomic_DNA"/>
</dbReference>
<dbReference type="PIR" id="A82701">
    <property type="entry name" value="A82701"/>
</dbReference>
<dbReference type="SMR" id="Q9PDT5"/>
<dbReference type="STRING" id="160492.XF_1294"/>
<dbReference type="KEGG" id="xfa:XF_1294"/>
<dbReference type="eggNOG" id="COG0245">
    <property type="taxonomic scope" value="Bacteria"/>
</dbReference>
<dbReference type="HOGENOM" id="CLU_084630_2_0_6"/>
<dbReference type="UniPathway" id="UPA00056">
    <property type="reaction ID" value="UER00095"/>
</dbReference>
<dbReference type="Proteomes" id="UP000000812">
    <property type="component" value="Chromosome"/>
</dbReference>
<dbReference type="GO" id="GO:0008685">
    <property type="term" value="F:2-C-methyl-D-erythritol 2,4-cyclodiphosphate synthase activity"/>
    <property type="evidence" value="ECO:0007669"/>
    <property type="project" value="UniProtKB-UniRule"/>
</dbReference>
<dbReference type="GO" id="GO:0046872">
    <property type="term" value="F:metal ion binding"/>
    <property type="evidence" value="ECO:0007669"/>
    <property type="project" value="UniProtKB-KW"/>
</dbReference>
<dbReference type="GO" id="GO:0019288">
    <property type="term" value="P:isopentenyl diphosphate biosynthetic process, methylerythritol 4-phosphate pathway"/>
    <property type="evidence" value="ECO:0007669"/>
    <property type="project" value="UniProtKB-UniRule"/>
</dbReference>
<dbReference type="GO" id="GO:0016114">
    <property type="term" value="P:terpenoid biosynthetic process"/>
    <property type="evidence" value="ECO:0007669"/>
    <property type="project" value="InterPro"/>
</dbReference>
<dbReference type="CDD" id="cd00554">
    <property type="entry name" value="MECDP_synthase"/>
    <property type="match status" value="1"/>
</dbReference>
<dbReference type="FunFam" id="3.30.1330.50:FF:000001">
    <property type="entry name" value="2-C-methyl-D-erythritol 2,4-cyclodiphosphate synthase"/>
    <property type="match status" value="1"/>
</dbReference>
<dbReference type="Gene3D" id="3.30.1330.50">
    <property type="entry name" value="2-C-methyl-D-erythritol 2,4-cyclodiphosphate synthase"/>
    <property type="match status" value="1"/>
</dbReference>
<dbReference type="HAMAP" id="MF_00107">
    <property type="entry name" value="IspF"/>
    <property type="match status" value="1"/>
</dbReference>
<dbReference type="InterPro" id="IPR003526">
    <property type="entry name" value="MECDP_synthase"/>
</dbReference>
<dbReference type="InterPro" id="IPR020555">
    <property type="entry name" value="MECDP_synthase_CS"/>
</dbReference>
<dbReference type="InterPro" id="IPR036571">
    <property type="entry name" value="MECDP_synthase_sf"/>
</dbReference>
<dbReference type="NCBIfam" id="TIGR00151">
    <property type="entry name" value="ispF"/>
    <property type="match status" value="1"/>
</dbReference>
<dbReference type="PANTHER" id="PTHR43181">
    <property type="entry name" value="2-C-METHYL-D-ERYTHRITOL 2,4-CYCLODIPHOSPHATE SYNTHASE, CHLOROPLASTIC"/>
    <property type="match status" value="1"/>
</dbReference>
<dbReference type="PANTHER" id="PTHR43181:SF1">
    <property type="entry name" value="2-C-METHYL-D-ERYTHRITOL 2,4-CYCLODIPHOSPHATE SYNTHASE, CHLOROPLASTIC"/>
    <property type="match status" value="1"/>
</dbReference>
<dbReference type="Pfam" id="PF02542">
    <property type="entry name" value="YgbB"/>
    <property type="match status" value="1"/>
</dbReference>
<dbReference type="SUPFAM" id="SSF69765">
    <property type="entry name" value="IpsF-like"/>
    <property type="match status" value="1"/>
</dbReference>
<dbReference type="PROSITE" id="PS01350">
    <property type="entry name" value="ISPF"/>
    <property type="match status" value="1"/>
</dbReference>
<organism>
    <name type="scientific">Xylella fastidiosa (strain 9a5c)</name>
    <dbReference type="NCBI Taxonomy" id="160492"/>
    <lineage>
        <taxon>Bacteria</taxon>
        <taxon>Pseudomonadati</taxon>
        <taxon>Pseudomonadota</taxon>
        <taxon>Gammaproteobacteria</taxon>
        <taxon>Lysobacterales</taxon>
        <taxon>Lysobacteraceae</taxon>
        <taxon>Xylella</taxon>
    </lineage>
</organism>